<proteinExistence type="inferred from homology"/>
<name>URE2_STAA3</name>
<accession>Q2FEK4</accession>
<keyword id="KW-0963">Cytoplasm</keyword>
<keyword id="KW-0378">Hydrolase</keyword>
<feature type="chain" id="PRO_0000239901" description="Urease subunit beta">
    <location>
        <begin position="1"/>
        <end position="136"/>
    </location>
</feature>
<feature type="region of interest" description="Disordered" evidence="2">
    <location>
        <begin position="113"/>
        <end position="136"/>
    </location>
</feature>
<protein>
    <recommendedName>
        <fullName evidence="1">Urease subunit beta</fullName>
        <ecNumber evidence="1">3.5.1.5</ecNumber>
    </recommendedName>
    <alternativeName>
        <fullName evidence="1">Urea amidohydrolase subunit beta</fullName>
    </alternativeName>
</protein>
<evidence type="ECO:0000255" key="1">
    <source>
        <dbReference type="HAMAP-Rule" id="MF_01954"/>
    </source>
</evidence>
<evidence type="ECO:0000256" key="2">
    <source>
        <dbReference type="SAM" id="MobiDB-lite"/>
    </source>
</evidence>
<organism>
    <name type="scientific">Staphylococcus aureus (strain USA300)</name>
    <dbReference type="NCBI Taxonomy" id="367830"/>
    <lineage>
        <taxon>Bacteria</taxon>
        <taxon>Bacillati</taxon>
        <taxon>Bacillota</taxon>
        <taxon>Bacilli</taxon>
        <taxon>Bacillales</taxon>
        <taxon>Staphylococcaceae</taxon>
        <taxon>Staphylococcus</taxon>
    </lineage>
</organism>
<dbReference type="EC" id="3.5.1.5" evidence="1"/>
<dbReference type="EMBL" id="CP000255">
    <property type="protein sequence ID" value="ABD20920.1"/>
    <property type="molecule type" value="Genomic_DNA"/>
</dbReference>
<dbReference type="RefSeq" id="WP_000612128.1">
    <property type="nucleotide sequence ID" value="NZ_CP027476.1"/>
</dbReference>
<dbReference type="SMR" id="Q2FEK4"/>
<dbReference type="KEGG" id="saa:SAUSA300_2239"/>
<dbReference type="HOGENOM" id="CLU_129707_2_2_9"/>
<dbReference type="OMA" id="FYEVNDA"/>
<dbReference type="UniPathway" id="UPA00258">
    <property type="reaction ID" value="UER00370"/>
</dbReference>
<dbReference type="Proteomes" id="UP000001939">
    <property type="component" value="Chromosome"/>
</dbReference>
<dbReference type="GO" id="GO:0035550">
    <property type="term" value="C:urease complex"/>
    <property type="evidence" value="ECO:0007669"/>
    <property type="project" value="InterPro"/>
</dbReference>
<dbReference type="GO" id="GO:0009039">
    <property type="term" value="F:urease activity"/>
    <property type="evidence" value="ECO:0007669"/>
    <property type="project" value="UniProtKB-UniRule"/>
</dbReference>
<dbReference type="GO" id="GO:0043419">
    <property type="term" value="P:urea catabolic process"/>
    <property type="evidence" value="ECO:0007669"/>
    <property type="project" value="UniProtKB-UniRule"/>
</dbReference>
<dbReference type="CDD" id="cd00407">
    <property type="entry name" value="Urease_beta"/>
    <property type="match status" value="1"/>
</dbReference>
<dbReference type="FunFam" id="2.10.150.10:FF:000001">
    <property type="entry name" value="Urease subunit beta"/>
    <property type="match status" value="1"/>
</dbReference>
<dbReference type="Gene3D" id="2.10.150.10">
    <property type="entry name" value="Urease, beta subunit"/>
    <property type="match status" value="1"/>
</dbReference>
<dbReference type="HAMAP" id="MF_01954">
    <property type="entry name" value="Urease_beta"/>
    <property type="match status" value="1"/>
</dbReference>
<dbReference type="InterPro" id="IPR002019">
    <property type="entry name" value="Urease_beta-like"/>
</dbReference>
<dbReference type="InterPro" id="IPR036461">
    <property type="entry name" value="Urease_betasu_sf"/>
</dbReference>
<dbReference type="InterPro" id="IPR050069">
    <property type="entry name" value="Urease_subunit"/>
</dbReference>
<dbReference type="NCBIfam" id="NF009682">
    <property type="entry name" value="PRK13203.1"/>
    <property type="match status" value="1"/>
</dbReference>
<dbReference type="NCBIfam" id="TIGR00192">
    <property type="entry name" value="urease_beta"/>
    <property type="match status" value="1"/>
</dbReference>
<dbReference type="PANTHER" id="PTHR33569">
    <property type="entry name" value="UREASE"/>
    <property type="match status" value="1"/>
</dbReference>
<dbReference type="PANTHER" id="PTHR33569:SF1">
    <property type="entry name" value="UREASE"/>
    <property type="match status" value="1"/>
</dbReference>
<dbReference type="Pfam" id="PF00699">
    <property type="entry name" value="Urease_beta"/>
    <property type="match status" value="1"/>
</dbReference>
<dbReference type="SUPFAM" id="SSF51278">
    <property type="entry name" value="Urease, beta-subunit"/>
    <property type="match status" value="1"/>
</dbReference>
<sequence>MIPGEIITKSTEVEINNHHPETVIEVENTGDRPIQVGSHFHFYEANAALDFEREMAYGKHLDIPAGAAVRFEPGDKKEVQLVEYAGKRKIFGFRGMVNGPIDESRVYRPTDENDEYAGVFGDNGAENVNKKGGKRS</sequence>
<comment type="catalytic activity">
    <reaction evidence="1">
        <text>urea + 2 H2O + H(+) = hydrogencarbonate + 2 NH4(+)</text>
        <dbReference type="Rhea" id="RHEA:20557"/>
        <dbReference type="ChEBI" id="CHEBI:15377"/>
        <dbReference type="ChEBI" id="CHEBI:15378"/>
        <dbReference type="ChEBI" id="CHEBI:16199"/>
        <dbReference type="ChEBI" id="CHEBI:17544"/>
        <dbReference type="ChEBI" id="CHEBI:28938"/>
        <dbReference type="EC" id="3.5.1.5"/>
    </reaction>
</comment>
<comment type="pathway">
    <text evidence="1">Nitrogen metabolism; urea degradation; CO(2) and NH(3) from urea (urease route): step 1/1.</text>
</comment>
<comment type="subunit">
    <text evidence="1">Heterotrimer of UreA (gamma), UreB (beta) and UreC (alpha) subunits. Three heterotrimers associate to form the active enzyme.</text>
</comment>
<comment type="subcellular location">
    <subcellularLocation>
        <location evidence="1">Cytoplasm</location>
    </subcellularLocation>
</comment>
<comment type="similarity">
    <text evidence="1">Belongs to the urease beta subunit family.</text>
</comment>
<reference key="1">
    <citation type="journal article" date="2006" name="Lancet">
        <title>Complete genome sequence of USA300, an epidemic clone of community-acquired meticillin-resistant Staphylococcus aureus.</title>
        <authorList>
            <person name="Diep B.A."/>
            <person name="Gill S.R."/>
            <person name="Chang R.F."/>
            <person name="Phan T.H."/>
            <person name="Chen J.H."/>
            <person name="Davidson M.G."/>
            <person name="Lin F."/>
            <person name="Lin J."/>
            <person name="Carleton H.A."/>
            <person name="Mongodin E.F."/>
            <person name="Sensabaugh G.F."/>
            <person name="Perdreau-Remington F."/>
        </authorList>
    </citation>
    <scope>NUCLEOTIDE SEQUENCE [LARGE SCALE GENOMIC DNA]</scope>
    <source>
        <strain>USA300</strain>
    </source>
</reference>
<gene>
    <name evidence="1" type="primary">ureB</name>
    <name type="ordered locus">SAUSA300_2239</name>
</gene>